<accession>O23016</accession>
<accession>Q39151</accession>
<reference key="1">
    <citation type="journal article" date="1995" name="Plant Physiol.">
        <title>Evidence that plant K+ channel proteins have two different types of subunits.</title>
        <authorList>
            <person name="Tang H."/>
            <person name="Vasconcelos A.C."/>
            <person name="Berkowitz G.A."/>
        </authorList>
    </citation>
    <scope>NUCLEOTIDE SEQUENCE [MRNA]</scope>
    <source>
        <strain>cv. Columbia</strain>
    </source>
</reference>
<reference key="2">
    <citation type="submission" date="1998-04" db="EMBL/GenBank/DDBJ databases">
        <title>Potassium channel beta subunit homolog.</title>
        <authorList>
            <person name="Spoormak P."/>
            <person name="Palme K."/>
        </authorList>
    </citation>
    <scope>NUCLEOTIDE SEQUENCE [MRNA]</scope>
    <source>
        <strain>cv. Columbia</strain>
    </source>
</reference>
<reference key="3">
    <citation type="journal article" date="2000" name="Nature">
        <title>Sequence and analysis of chromosome 1 of the plant Arabidopsis thaliana.</title>
        <authorList>
            <person name="Theologis A."/>
            <person name="Ecker J.R."/>
            <person name="Palm C.J."/>
            <person name="Federspiel N.A."/>
            <person name="Kaul S."/>
            <person name="White O."/>
            <person name="Alonso J."/>
            <person name="Altafi H."/>
            <person name="Araujo R."/>
            <person name="Bowman C.L."/>
            <person name="Brooks S.Y."/>
            <person name="Buehler E."/>
            <person name="Chan A."/>
            <person name="Chao Q."/>
            <person name="Chen H."/>
            <person name="Cheuk R.F."/>
            <person name="Chin C.W."/>
            <person name="Chung M.K."/>
            <person name="Conn L."/>
            <person name="Conway A.B."/>
            <person name="Conway A.R."/>
            <person name="Creasy T.H."/>
            <person name="Dewar K."/>
            <person name="Dunn P."/>
            <person name="Etgu P."/>
            <person name="Feldblyum T.V."/>
            <person name="Feng J.-D."/>
            <person name="Fong B."/>
            <person name="Fujii C.Y."/>
            <person name="Gill J.E."/>
            <person name="Goldsmith A.D."/>
            <person name="Haas B."/>
            <person name="Hansen N.F."/>
            <person name="Hughes B."/>
            <person name="Huizar L."/>
            <person name="Hunter J.L."/>
            <person name="Jenkins J."/>
            <person name="Johnson-Hopson C."/>
            <person name="Khan S."/>
            <person name="Khaykin E."/>
            <person name="Kim C.J."/>
            <person name="Koo H.L."/>
            <person name="Kremenetskaia I."/>
            <person name="Kurtz D.B."/>
            <person name="Kwan A."/>
            <person name="Lam B."/>
            <person name="Langin-Hooper S."/>
            <person name="Lee A."/>
            <person name="Lee J.M."/>
            <person name="Lenz C.A."/>
            <person name="Li J.H."/>
            <person name="Li Y.-P."/>
            <person name="Lin X."/>
            <person name="Liu S.X."/>
            <person name="Liu Z.A."/>
            <person name="Luros J.S."/>
            <person name="Maiti R."/>
            <person name="Marziali A."/>
            <person name="Militscher J."/>
            <person name="Miranda M."/>
            <person name="Nguyen M."/>
            <person name="Nierman W.C."/>
            <person name="Osborne B.I."/>
            <person name="Pai G."/>
            <person name="Peterson J."/>
            <person name="Pham P.K."/>
            <person name="Rizzo M."/>
            <person name="Rooney T."/>
            <person name="Rowley D."/>
            <person name="Sakano H."/>
            <person name="Salzberg S.L."/>
            <person name="Schwartz J.R."/>
            <person name="Shinn P."/>
            <person name="Southwick A.M."/>
            <person name="Sun H."/>
            <person name="Tallon L.J."/>
            <person name="Tambunga G."/>
            <person name="Toriumi M.J."/>
            <person name="Town C.D."/>
            <person name="Utterback T."/>
            <person name="Van Aken S."/>
            <person name="Vaysberg M."/>
            <person name="Vysotskaia V.S."/>
            <person name="Walker M."/>
            <person name="Wu D."/>
            <person name="Yu G."/>
            <person name="Fraser C.M."/>
            <person name="Venter J.C."/>
            <person name="Davis R.W."/>
        </authorList>
    </citation>
    <scope>NUCLEOTIDE SEQUENCE [LARGE SCALE GENOMIC DNA]</scope>
    <source>
        <strain>cv. Columbia</strain>
    </source>
</reference>
<reference key="4">
    <citation type="journal article" date="2017" name="Plant J.">
        <title>Araport11: a complete reannotation of the Arabidopsis thaliana reference genome.</title>
        <authorList>
            <person name="Cheng C.Y."/>
            <person name="Krishnakumar V."/>
            <person name="Chan A.P."/>
            <person name="Thibaud-Nissen F."/>
            <person name="Schobel S."/>
            <person name="Town C.D."/>
        </authorList>
    </citation>
    <scope>GENOME REANNOTATION</scope>
    <source>
        <strain>cv. Columbia</strain>
    </source>
</reference>
<reference key="5">
    <citation type="journal article" date="2003" name="Science">
        <title>Empirical analysis of transcriptional activity in the Arabidopsis genome.</title>
        <authorList>
            <person name="Yamada K."/>
            <person name="Lim J."/>
            <person name="Dale J.M."/>
            <person name="Chen H."/>
            <person name="Shinn P."/>
            <person name="Palm C.J."/>
            <person name="Southwick A.M."/>
            <person name="Wu H.C."/>
            <person name="Kim C.J."/>
            <person name="Nguyen M."/>
            <person name="Pham P.K."/>
            <person name="Cheuk R.F."/>
            <person name="Karlin-Newmann G."/>
            <person name="Liu S.X."/>
            <person name="Lam B."/>
            <person name="Sakano H."/>
            <person name="Wu T."/>
            <person name="Yu G."/>
            <person name="Miranda M."/>
            <person name="Quach H.L."/>
            <person name="Tripp M."/>
            <person name="Chang C.H."/>
            <person name="Lee J.M."/>
            <person name="Toriumi M.J."/>
            <person name="Chan M.M."/>
            <person name="Tang C.C."/>
            <person name="Onodera C.S."/>
            <person name="Deng J.M."/>
            <person name="Akiyama K."/>
            <person name="Ansari Y."/>
            <person name="Arakawa T."/>
            <person name="Banh J."/>
            <person name="Banno F."/>
            <person name="Bowser L."/>
            <person name="Brooks S.Y."/>
            <person name="Carninci P."/>
            <person name="Chao Q."/>
            <person name="Choy N."/>
            <person name="Enju A."/>
            <person name="Goldsmith A.D."/>
            <person name="Gurjal M."/>
            <person name="Hansen N.F."/>
            <person name="Hayashizaki Y."/>
            <person name="Johnson-Hopson C."/>
            <person name="Hsuan V.W."/>
            <person name="Iida K."/>
            <person name="Karnes M."/>
            <person name="Khan S."/>
            <person name="Koesema E."/>
            <person name="Ishida J."/>
            <person name="Jiang P.X."/>
            <person name="Jones T."/>
            <person name="Kawai J."/>
            <person name="Kamiya A."/>
            <person name="Meyers C."/>
            <person name="Nakajima M."/>
            <person name="Narusaka M."/>
            <person name="Seki M."/>
            <person name="Sakurai T."/>
            <person name="Satou M."/>
            <person name="Tamse R."/>
            <person name="Vaysberg M."/>
            <person name="Wallender E.K."/>
            <person name="Wong C."/>
            <person name="Yamamura Y."/>
            <person name="Yuan S."/>
            <person name="Shinozaki K."/>
            <person name="Davis R.W."/>
            <person name="Theologis A."/>
            <person name="Ecker J.R."/>
        </authorList>
    </citation>
    <scope>NUCLEOTIDE SEQUENCE [LARGE SCALE MRNA]</scope>
    <source>
        <strain>cv. Columbia</strain>
    </source>
</reference>
<reference key="6">
    <citation type="journal article" date="1996" name="Plant Cell">
        <title>Physical association of KAB1 with plant K+ channel alpha subunits.</title>
        <authorList>
            <person name="Tang H."/>
            <person name="Vasconcelos A.C."/>
            <person name="Berkowitz G.A."/>
        </authorList>
    </citation>
    <scope>FUNCTION</scope>
    <scope>SUBUNIT</scope>
    <scope>TISSUE SPECIFICITY</scope>
</reference>
<feature type="chain" id="PRO_0000415614" description="Probable voltage-gated potassium channel subunit beta">
    <location>
        <begin position="1"/>
        <end position="328"/>
    </location>
</feature>
<feature type="active site" description="Proton donor/acceptor" evidence="1">
    <location>
        <position position="54"/>
    </location>
</feature>
<feature type="binding site" evidence="1">
    <location>
        <position position="21"/>
    </location>
    <ligand>
        <name>NADP(+)</name>
        <dbReference type="ChEBI" id="CHEBI:58349"/>
    </ligand>
</feature>
<feature type="binding site" evidence="1">
    <location>
        <position position="27"/>
    </location>
    <ligand>
        <name>NADP(+)</name>
        <dbReference type="ChEBI" id="CHEBI:58349"/>
    </ligand>
</feature>
<feature type="binding site" evidence="1">
    <location>
        <position position="49"/>
    </location>
    <ligand>
        <name>NADP(+)</name>
        <dbReference type="ChEBI" id="CHEBI:58349"/>
    </ligand>
</feature>
<feature type="binding site" evidence="1">
    <location>
        <position position="152"/>
    </location>
    <ligand>
        <name>NADP(+)</name>
        <dbReference type="ChEBI" id="CHEBI:58349"/>
    </ligand>
</feature>
<feature type="binding site" evidence="1">
    <location>
        <position position="178"/>
    </location>
    <ligand>
        <name>NADP(+)</name>
        <dbReference type="ChEBI" id="CHEBI:58349"/>
    </ligand>
</feature>
<feature type="binding site" evidence="1">
    <location>
        <position position="207"/>
    </location>
    <ligand>
        <name>NADP(+)</name>
        <dbReference type="ChEBI" id="CHEBI:58349"/>
    </ligand>
</feature>
<feature type="binding site" evidence="1">
    <location>
        <position position="208"/>
    </location>
    <ligand>
        <name>NADP(+)</name>
        <dbReference type="ChEBI" id="CHEBI:58349"/>
    </ligand>
</feature>
<feature type="binding site" evidence="1">
    <location>
        <position position="209"/>
    </location>
    <ligand>
        <name>NADP(+)</name>
        <dbReference type="ChEBI" id="CHEBI:58349"/>
    </ligand>
</feature>
<feature type="binding site" evidence="1">
    <location>
        <position position="210"/>
    </location>
    <ligand>
        <name>NADP(+)</name>
        <dbReference type="ChEBI" id="CHEBI:58349"/>
    </ligand>
</feature>
<feature type="binding site" evidence="1">
    <location>
        <position position="211"/>
    </location>
    <ligand>
        <name>NADP(+)</name>
        <dbReference type="ChEBI" id="CHEBI:58349"/>
    </ligand>
</feature>
<feature type="binding site" evidence="1">
    <location>
        <position position="218"/>
    </location>
    <ligand>
        <name>NADP(+)</name>
        <dbReference type="ChEBI" id="CHEBI:58349"/>
    </ligand>
</feature>
<feature type="binding site" evidence="1">
    <location>
        <position position="229"/>
    </location>
    <ligand>
        <name>NADP(+)</name>
        <dbReference type="ChEBI" id="CHEBI:58349"/>
    </ligand>
</feature>
<feature type="binding site" evidence="1">
    <location>
        <position position="285"/>
    </location>
    <ligand>
        <name>NADP(+)</name>
        <dbReference type="ChEBI" id="CHEBI:58349"/>
    </ligand>
</feature>
<feature type="binding site" evidence="1">
    <location>
        <position position="287"/>
    </location>
    <ligand>
        <name>NADP(+)</name>
        <dbReference type="ChEBI" id="CHEBI:58349"/>
    </ligand>
</feature>
<feature type="binding site" evidence="1">
    <location>
        <position position="291"/>
    </location>
    <ligand>
        <name>NADP(+)</name>
        <dbReference type="ChEBI" id="CHEBI:58349"/>
    </ligand>
</feature>
<feature type="binding site" evidence="1">
    <location>
        <position position="294"/>
    </location>
    <ligand>
        <name>NADP(+)</name>
        <dbReference type="ChEBI" id="CHEBI:58349"/>
    </ligand>
</feature>
<feature type="binding site" evidence="1">
    <location>
        <position position="295"/>
    </location>
    <ligand>
        <name>NADP(+)</name>
        <dbReference type="ChEBI" id="CHEBI:58349"/>
    </ligand>
</feature>
<feature type="sequence conflict" description="In Ref. 1; AAA87294." evidence="3" ref="1">
    <original>T</original>
    <variation>A</variation>
    <location>
        <position position="133"/>
    </location>
</feature>
<feature type="sequence conflict" description="In Ref. 1; AAA87294." evidence="3" ref="1">
    <original>T</original>
    <variation>I</variation>
    <location>
        <position position="151"/>
    </location>
</feature>
<feature type="sequence conflict" description="In Ref. 1; AAA87294." evidence="3" ref="1">
    <original>D</original>
    <variation>G</variation>
    <location>
        <position position="259"/>
    </location>
</feature>
<feature type="sequence conflict" description="In Ref. 1; AAA87294." evidence="3" ref="1">
    <original>E</original>
    <variation>G</variation>
    <location>
        <position position="289"/>
    </location>
</feature>
<proteinExistence type="evidence at protein level"/>
<evidence type="ECO:0000250" key="1">
    <source>
        <dbReference type="UniProtKB" id="P62483"/>
    </source>
</evidence>
<evidence type="ECO:0000269" key="2">
    <source>
    </source>
</evidence>
<evidence type="ECO:0000305" key="3"/>
<evidence type="ECO:0000305" key="4">
    <source>
    </source>
</evidence>
<dbReference type="EC" id="1.1.1.-" evidence="1"/>
<dbReference type="EMBL" id="L40948">
    <property type="protein sequence ID" value="AAA87294.1"/>
    <property type="molecule type" value="mRNA"/>
</dbReference>
<dbReference type="EMBL" id="AF061570">
    <property type="protein sequence ID" value="AAC15999.1"/>
    <property type="molecule type" value="mRNA"/>
</dbReference>
<dbReference type="EMBL" id="AC002376">
    <property type="protein sequence ID" value="AAB80621.1"/>
    <property type="molecule type" value="Genomic_DNA"/>
</dbReference>
<dbReference type="EMBL" id="CP002684">
    <property type="protein sequence ID" value="AEE27734.1"/>
    <property type="molecule type" value="Genomic_DNA"/>
</dbReference>
<dbReference type="EMBL" id="AY050821">
    <property type="protein sequence ID" value="AAK92756.1"/>
    <property type="molecule type" value="mRNA"/>
</dbReference>
<dbReference type="EMBL" id="AY091424">
    <property type="protein sequence ID" value="AAM14363.1"/>
    <property type="molecule type" value="mRNA"/>
</dbReference>
<dbReference type="PIR" id="T52133">
    <property type="entry name" value="T52133"/>
</dbReference>
<dbReference type="RefSeq" id="NP_171963.1">
    <property type="nucleotide sequence ID" value="NM_100349.4"/>
</dbReference>
<dbReference type="SMR" id="O23016"/>
<dbReference type="BioGRID" id="24685">
    <property type="interactions" value="4"/>
</dbReference>
<dbReference type="FunCoup" id="O23016">
    <property type="interactions" value="1664"/>
</dbReference>
<dbReference type="IntAct" id="O23016">
    <property type="interactions" value="2"/>
</dbReference>
<dbReference type="STRING" id="3702.O23016"/>
<dbReference type="PaxDb" id="3702-AT1G04690.1"/>
<dbReference type="ProteomicsDB" id="232245"/>
<dbReference type="EnsemblPlants" id="AT1G04690.1">
    <property type="protein sequence ID" value="AT1G04690.1"/>
    <property type="gene ID" value="AT1G04690"/>
</dbReference>
<dbReference type="GeneID" id="839450"/>
<dbReference type="Gramene" id="AT1G04690.1">
    <property type="protein sequence ID" value="AT1G04690.1"/>
    <property type="gene ID" value="AT1G04690"/>
</dbReference>
<dbReference type="KEGG" id="ath:AT1G04690"/>
<dbReference type="Araport" id="AT1G04690"/>
<dbReference type="TAIR" id="AT1G04690">
    <property type="gene designation" value="KAB1"/>
</dbReference>
<dbReference type="eggNOG" id="KOG1575">
    <property type="taxonomic scope" value="Eukaryota"/>
</dbReference>
<dbReference type="HOGENOM" id="CLU_023205_2_0_1"/>
<dbReference type="InParanoid" id="O23016"/>
<dbReference type="OMA" id="MWAGPYG"/>
<dbReference type="OrthoDB" id="1024613at2759"/>
<dbReference type="PhylomeDB" id="O23016"/>
<dbReference type="CD-CODE" id="4299E36E">
    <property type="entry name" value="Nucleolus"/>
</dbReference>
<dbReference type="PRO" id="PR:O23016"/>
<dbReference type="Proteomes" id="UP000006548">
    <property type="component" value="Chromosome 1"/>
</dbReference>
<dbReference type="ExpressionAtlas" id="O23016">
    <property type="expression patterns" value="baseline and differential"/>
</dbReference>
<dbReference type="GO" id="GO:0005576">
    <property type="term" value="C:extracellular region"/>
    <property type="evidence" value="ECO:0007005"/>
    <property type="project" value="TAIR"/>
</dbReference>
<dbReference type="GO" id="GO:0034702">
    <property type="term" value="C:monoatomic ion channel complex"/>
    <property type="evidence" value="ECO:0007669"/>
    <property type="project" value="UniProtKB-KW"/>
</dbReference>
<dbReference type="GO" id="GO:0005886">
    <property type="term" value="C:plasma membrane"/>
    <property type="evidence" value="ECO:0007005"/>
    <property type="project" value="TAIR"/>
</dbReference>
<dbReference type="GO" id="GO:0009506">
    <property type="term" value="C:plasmodesma"/>
    <property type="evidence" value="ECO:0007005"/>
    <property type="project" value="TAIR"/>
</dbReference>
<dbReference type="GO" id="GO:0016491">
    <property type="term" value="F:oxidoreductase activity"/>
    <property type="evidence" value="ECO:0007669"/>
    <property type="project" value="UniProtKB-KW"/>
</dbReference>
<dbReference type="GO" id="GO:0034220">
    <property type="term" value="P:monoatomic ion transmembrane transport"/>
    <property type="evidence" value="ECO:0007669"/>
    <property type="project" value="UniProtKB-KW"/>
</dbReference>
<dbReference type="GO" id="GO:0006813">
    <property type="term" value="P:potassium ion transport"/>
    <property type="evidence" value="ECO:0007669"/>
    <property type="project" value="UniProtKB-KW"/>
</dbReference>
<dbReference type="CDD" id="cd19143">
    <property type="entry name" value="AKR_AKR6C1_2"/>
    <property type="match status" value="1"/>
</dbReference>
<dbReference type="FunFam" id="3.20.20.100:FF:000042">
    <property type="entry name" value="Probable voltage-gated potassium channel subunit beta"/>
    <property type="match status" value="1"/>
</dbReference>
<dbReference type="Gene3D" id="3.20.20.100">
    <property type="entry name" value="NADP-dependent oxidoreductase domain"/>
    <property type="match status" value="1"/>
</dbReference>
<dbReference type="InterPro" id="IPR005399">
    <property type="entry name" value="K_chnl_volt-dep_bsu_KCNAB-rel"/>
</dbReference>
<dbReference type="InterPro" id="IPR023210">
    <property type="entry name" value="NADP_OxRdtase_dom"/>
</dbReference>
<dbReference type="InterPro" id="IPR036812">
    <property type="entry name" value="NADP_OxRdtase_dom_sf"/>
</dbReference>
<dbReference type="PANTHER" id="PTHR43150">
    <property type="entry name" value="HYPERKINETIC, ISOFORM M"/>
    <property type="match status" value="1"/>
</dbReference>
<dbReference type="PANTHER" id="PTHR43150:SF2">
    <property type="entry name" value="HYPERKINETIC, ISOFORM M"/>
    <property type="match status" value="1"/>
</dbReference>
<dbReference type="Pfam" id="PF00248">
    <property type="entry name" value="Aldo_ket_red"/>
    <property type="match status" value="1"/>
</dbReference>
<dbReference type="PRINTS" id="PR01577">
    <property type="entry name" value="KCNABCHANNEL"/>
</dbReference>
<dbReference type="SUPFAM" id="SSF51430">
    <property type="entry name" value="NAD(P)-linked oxidoreductase"/>
    <property type="match status" value="1"/>
</dbReference>
<keyword id="KW-0407">Ion channel</keyword>
<keyword id="KW-0406">Ion transport</keyword>
<keyword id="KW-0521">NADP</keyword>
<keyword id="KW-0560">Oxidoreductase</keyword>
<keyword id="KW-0630">Potassium</keyword>
<keyword id="KW-0633">Potassium transport</keyword>
<keyword id="KW-1185">Reference proteome</keyword>
<keyword id="KW-0813">Transport</keyword>
<keyword id="KW-0851">Voltage-gated channel</keyword>
<name>KCAB_ARATH</name>
<organism>
    <name type="scientific">Arabidopsis thaliana</name>
    <name type="common">Mouse-ear cress</name>
    <dbReference type="NCBI Taxonomy" id="3702"/>
    <lineage>
        <taxon>Eukaryota</taxon>
        <taxon>Viridiplantae</taxon>
        <taxon>Streptophyta</taxon>
        <taxon>Embryophyta</taxon>
        <taxon>Tracheophyta</taxon>
        <taxon>Spermatophyta</taxon>
        <taxon>Magnoliopsida</taxon>
        <taxon>eudicotyledons</taxon>
        <taxon>Gunneridae</taxon>
        <taxon>Pentapetalae</taxon>
        <taxon>rosids</taxon>
        <taxon>malvids</taxon>
        <taxon>Brassicales</taxon>
        <taxon>Brassicaceae</taxon>
        <taxon>Camelineae</taxon>
        <taxon>Arabidopsis</taxon>
    </lineage>
</organism>
<gene>
    <name type="primary">KAB1</name>
    <name type="synonym">KV-BETA1</name>
    <name type="ordered locus">At1g04690</name>
    <name type="ORF">T1G11.6</name>
</gene>
<comment type="function">
    <text evidence="2">Probable accessory potassium channel protein which modulates the activity of the pore-forming alpha subunit.</text>
</comment>
<comment type="subunit">
    <text evidence="4">Forms heteromultimeric complexes with potassium channel alpha subunits.</text>
</comment>
<comment type="tissue specificity">
    <text evidence="2">Expressed in roots, leaves and flowers (at protein level).</text>
</comment>
<comment type="similarity">
    <text evidence="3">Belongs to the shaker potassium channel beta subunit family.</text>
</comment>
<protein>
    <recommendedName>
        <fullName>Probable voltage-gated potassium channel subunit beta</fullName>
        <ecNumber evidence="1">1.1.1.-</ecNumber>
    </recommendedName>
    <alternativeName>
        <fullName>K(+) channel subunit beta</fullName>
    </alternativeName>
    <alternativeName>
        <fullName>Potassium voltage beta 1</fullName>
        <shortName>KV-beta1</shortName>
    </alternativeName>
</protein>
<sequence>MQYKNLGKSGLKVSTLSFGAWVTFGNQLDVKEAKSILQCCRDHGVNFFDNAEVYANGRAEEIMGQAIRELGWRRSDIVISTKIFWGGPGPNDKGLSRKHIVEGTKASLKRLDMDYVDVLYCHRPDASTPIEETVRAMNYVIDKGWAFYWGTSEWSAQQITEAWGAADRLDLVGPIVEQPEYNMFARHKVETEFLPLYTNHGIGLTTWSPLASGVLTGKYNKGAIPSDSRFALENYKNLANRSLVDDVLRKVSGLKPIADELGVTLAQLAIAWCASNPNVSSVITGATRESQIQENMKAVDVIPLLTPIVLDKIEQVIQSKPKRPESYR</sequence>